<protein>
    <recommendedName>
        <fullName>Splicing factor U2AF 35 kDa subunit</fullName>
    </recommendedName>
    <alternativeName>
        <fullName>U2 auxiliary factor 35 kDa subunit</fullName>
    </alternativeName>
    <alternativeName>
        <fullName>U2 snRNP auxiliary factor small subunit</fullName>
    </alternativeName>
</protein>
<comment type="function">
    <text evidence="1">Plays a critical role in both constitutive and enhancer-dependent splicing by mediating protein-protein interactions and protein-RNA interactions required for accurate 3'-splice site selection. Recruits U2 snRNP to the branch point. Directly mediates interactions between U2AF2 and proteins bound to the enhancers and thus may function as a bridge between U2AF2 and the enhancer complex to recruit it to the adjacent intron (By similarity).</text>
</comment>
<comment type="subunit">
    <text evidence="2 3">Identified in the spliceosome C complex (By similarity). Heterodimer with U2AF2 (By similarity). Interacts (via RS domain) with PHF5A (via N-terminus) (By similarity). Interacts with ZRANB2 (By similarity). Interacts with SDE2 (By similarity). Interacts with SF3B1 (By similarity).</text>
</comment>
<comment type="subcellular location">
    <subcellularLocation>
        <location evidence="1">Nucleus</location>
    </subcellularLocation>
    <subcellularLocation>
        <location evidence="1">Nucleus speckle</location>
    </subcellularLocation>
</comment>
<comment type="similarity">
    <text evidence="6">Belongs to the splicing factor SR family.</text>
</comment>
<evidence type="ECO:0000250" key="1"/>
<evidence type="ECO:0000250" key="2">
    <source>
        <dbReference type="UniProtKB" id="Q01081"/>
    </source>
</evidence>
<evidence type="ECO:0000250" key="3">
    <source>
        <dbReference type="UniProtKB" id="Q9D883"/>
    </source>
</evidence>
<evidence type="ECO:0000255" key="4">
    <source>
        <dbReference type="PROSITE-ProRule" id="PRU00176"/>
    </source>
</evidence>
<evidence type="ECO:0000255" key="5">
    <source>
        <dbReference type="PROSITE-ProRule" id="PRU00723"/>
    </source>
</evidence>
<evidence type="ECO:0000305" key="6"/>
<dbReference type="EMBL" id="F14757">
    <property type="protein sequence ID" value="CAA23231.1"/>
    <property type="molecule type" value="mRNA"/>
</dbReference>
<dbReference type="SMR" id="Q29350"/>
<dbReference type="STRING" id="9823.ENSSSCP00000044103"/>
<dbReference type="PaxDb" id="9823-ENSSSCP00000003119"/>
<dbReference type="PeptideAtlas" id="Q29350"/>
<dbReference type="eggNOG" id="KOG2202">
    <property type="taxonomic scope" value="Eukaryota"/>
</dbReference>
<dbReference type="HOGENOM" id="CLU_059852_1_0_1"/>
<dbReference type="InParanoid" id="Q29350"/>
<dbReference type="Proteomes" id="UP000008227">
    <property type="component" value="Unplaced"/>
</dbReference>
<dbReference type="Proteomes" id="UP000314985">
    <property type="component" value="Unplaced"/>
</dbReference>
<dbReference type="Proteomes" id="UP000694570">
    <property type="component" value="Unplaced"/>
</dbReference>
<dbReference type="Proteomes" id="UP000694571">
    <property type="component" value="Unplaced"/>
</dbReference>
<dbReference type="Proteomes" id="UP000694720">
    <property type="component" value="Unplaced"/>
</dbReference>
<dbReference type="Proteomes" id="UP000694722">
    <property type="component" value="Unplaced"/>
</dbReference>
<dbReference type="Proteomes" id="UP000694723">
    <property type="component" value="Unplaced"/>
</dbReference>
<dbReference type="Proteomes" id="UP000694724">
    <property type="component" value="Unplaced"/>
</dbReference>
<dbReference type="Proteomes" id="UP000694725">
    <property type="component" value="Unplaced"/>
</dbReference>
<dbReference type="Proteomes" id="UP000694726">
    <property type="component" value="Unplaced"/>
</dbReference>
<dbReference type="Proteomes" id="UP000694727">
    <property type="component" value="Unplaced"/>
</dbReference>
<dbReference type="Proteomes" id="UP000694728">
    <property type="component" value="Unplaced"/>
</dbReference>
<dbReference type="GO" id="GO:0016607">
    <property type="term" value="C:nuclear speck"/>
    <property type="evidence" value="ECO:0000250"/>
    <property type="project" value="UniProtKB"/>
</dbReference>
<dbReference type="GO" id="GO:0005681">
    <property type="term" value="C:spliceosomal complex"/>
    <property type="evidence" value="ECO:0007669"/>
    <property type="project" value="UniProtKB-KW"/>
</dbReference>
<dbReference type="GO" id="GO:0089701">
    <property type="term" value="C:U2AF complex"/>
    <property type="evidence" value="ECO:0007669"/>
    <property type="project" value="InterPro"/>
</dbReference>
<dbReference type="GO" id="GO:0003723">
    <property type="term" value="F:RNA binding"/>
    <property type="evidence" value="ECO:0007669"/>
    <property type="project" value="UniProtKB-KW"/>
</dbReference>
<dbReference type="GO" id="GO:0008270">
    <property type="term" value="F:zinc ion binding"/>
    <property type="evidence" value="ECO:0007669"/>
    <property type="project" value="UniProtKB-KW"/>
</dbReference>
<dbReference type="GO" id="GO:0000398">
    <property type="term" value="P:mRNA splicing, via spliceosome"/>
    <property type="evidence" value="ECO:0007669"/>
    <property type="project" value="InterPro"/>
</dbReference>
<dbReference type="InterPro" id="IPR009145">
    <property type="entry name" value="U2AF_small"/>
</dbReference>
<dbReference type="InterPro" id="IPR000571">
    <property type="entry name" value="Znf_CCCH"/>
</dbReference>
<dbReference type="InterPro" id="IPR036855">
    <property type="entry name" value="Znf_CCCH_sf"/>
</dbReference>
<dbReference type="PANTHER" id="PTHR12620">
    <property type="entry name" value="U2 SNRNP AUXILIARY FACTOR, SMALL SUBUNIT"/>
    <property type="match status" value="1"/>
</dbReference>
<dbReference type="Pfam" id="PF00642">
    <property type="entry name" value="zf-CCCH"/>
    <property type="match status" value="1"/>
</dbReference>
<dbReference type="PRINTS" id="PR01848">
    <property type="entry name" value="U2AUXFACTOR"/>
</dbReference>
<dbReference type="SMART" id="SM00356">
    <property type="entry name" value="ZnF_C3H1"/>
    <property type="match status" value="1"/>
</dbReference>
<dbReference type="SUPFAM" id="SSF90229">
    <property type="entry name" value="CCCH zinc finger"/>
    <property type="match status" value="1"/>
</dbReference>
<dbReference type="PROSITE" id="PS50103">
    <property type="entry name" value="ZF_C3H1"/>
    <property type="match status" value="1"/>
</dbReference>
<organism>
    <name type="scientific">Sus scrofa</name>
    <name type="common">Pig</name>
    <dbReference type="NCBI Taxonomy" id="9823"/>
    <lineage>
        <taxon>Eukaryota</taxon>
        <taxon>Metazoa</taxon>
        <taxon>Chordata</taxon>
        <taxon>Craniata</taxon>
        <taxon>Vertebrata</taxon>
        <taxon>Euteleostomi</taxon>
        <taxon>Mammalia</taxon>
        <taxon>Eutheria</taxon>
        <taxon>Laurasiatheria</taxon>
        <taxon>Artiodactyla</taxon>
        <taxon>Suina</taxon>
        <taxon>Suidae</taxon>
        <taxon>Sus</taxon>
    </lineage>
</organism>
<keyword id="KW-0007">Acetylation</keyword>
<keyword id="KW-0479">Metal-binding</keyword>
<keyword id="KW-0488">Methylation</keyword>
<keyword id="KW-0507">mRNA processing</keyword>
<keyword id="KW-0508">mRNA splicing</keyword>
<keyword id="KW-0539">Nucleus</keyword>
<keyword id="KW-1185">Reference proteome</keyword>
<keyword id="KW-0677">Repeat</keyword>
<keyword id="KW-0694">RNA-binding</keyword>
<keyword id="KW-0747">Spliceosome</keyword>
<keyword id="KW-0862">Zinc</keyword>
<keyword id="KW-0863">Zinc-finger</keyword>
<accession>Q29350</accession>
<feature type="initiator methionine" description="Removed" evidence="2">
    <location>
        <position position="1"/>
    </location>
</feature>
<feature type="chain" id="PRO_0000081996" description="Splicing factor U2AF 35 kDa subunit">
    <location>
        <begin position="2"/>
        <end position="82" status="greater than"/>
    </location>
</feature>
<feature type="domain" description="RRM" evidence="4">
    <location>
        <begin position="65"/>
        <end position="82" status="greater than"/>
    </location>
</feature>
<feature type="zinc finger region" description="C3H1-type" evidence="5">
    <location>
        <begin position="12"/>
        <end position="40"/>
    </location>
</feature>
<feature type="modified residue" description="N-acetylalanine" evidence="2">
    <location>
        <position position="2"/>
    </location>
</feature>
<feature type="modified residue" description="N6-methyllysine" evidence="2">
    <location>
        <position position="39"/>
    </location>
</feature>
<feature type="non-terminal residue">
    <location>
        <position position="82"/>
    </location>
</feature>
<reference key="1">
    <citation type="journal article" date="1996" name="Mamm. Genome">
        <title>Evaluation and characterization of a porcine small intestine cDNA library: analysis of 839 clones.</title>
        <authorList>
            <person name="Winteroe A.K."/>
            <person name="Fredholm M."/>
            <person name="Davies W."/>
        </authorList>
    </citation>
    <scope>NUCLEOTIDE SEQUENCE [LARGE SCALE MRNA]</scope>
    <source>
        <tissue>Small intestine</tissue>
    </source>
</reference>
<sequence>MAEYLASIFGTEKDKVNCSFYFKIGACRHGDRCSRLHNKPTFSQTIVLLNLYRNPQNTAQTADGSHCHVSDVEVQEHYDNFF</sequence>
<name>U2AF1_PIG</name>
<gene>
    <name type="primary">U2AF1</name>
</gene>
<proteinExistence type="evidence at transcript level"/>